<feature type="chain" id="PRO_1000066773" description="UPF0210 protein Pars_1033">
    <location>
        <begin position="1"/>
        <end position="448"/>
    </location>
</feature>
<reference key="1">
    <citation type="submission" date="2007-04" db="EMBL/GenBank/DDBJ databases">
        <title>Complete sequence of Pyrobaculum arsenaticum DSM 13514.</title>
        <authorList>
            <consortium name="US DOE Joint Genome Institute"/>
            <person name="Copeland A."/>
            <person name="Lucas S."/>
            <person name="Lapidus A."/>
            <person name="Barry K."/>
            <person name="Glavina del Rio T."/>
            <person name="Dalin E."/>
            <person name="Tice H."/>
            <person name="Pitluck S."/>
            <person name="Chain P."/>
            <person name="Malfatti S."/>
            <person name="Shin M."/>
            <person name="Vergez L."/>
            <person name="Schmutz J."/>
            <person name="Larimer F."/>
            <person name="Land M."/>
            <person name="Hauser L."/>
            <person name="Kyrpides N."/>
            <person name="Mikhailova N."/>
            <person name="Cozen A.E."/>
            <person name="Fitz-Gibbon S.T."/>
            <person name="House C.H."/>
            <person name="Saltikov C."/>
            <person name="Lowe T.M."/>
            <person name="Richardson P."/>
        </authorList>
    </citation>
    <scope>NUCLEOTIDE SEQUENCE [LARGE SCALE GENOMIC DNA]</scope>
    <source>
        <strain>ATCC 700994 / DSM 13514 / JCM 11321 / PZ6</strain>
    </source>
</reference>
<sequence>MRFDPREIGEVLEMLLFRELDIRAVTLSVNTLPAIRPNLKDTLDALSHLLEPYARRLRPAAEKVASKLGVRIVTVRLAVSPTSIMLEPLGDAKAAVEIAAFLDKLAGRHGVDMVGGFSAFVHGGVSRGAAALIESLAEALNSTERVAGFLNAASTMTGINLEAVRRAARIVLSLKPHAAARFAVTSNLPEDVPFMPGAYHGLGQPDAVVNIAVSGPGVIEAVVRSLPDADVRTLHDAIKRAAFKITRLGELVGREVAKELGVAFGAVDLSVAPSPKVGDSVAAVLEAMGLPRVGAPGSVFALALFTDAVKKGGAMAASTIGGLSGAFIPVSEDAVMAQAAAEGAITLDGLKAMAAVCNTGLDMVGIPADVGPDVVAAIIADVMALAVHLDKPLGVRLIPVPGARPGDFYDLGGLYGRVAVVDASRYSRIPLVARPGTAPPGVERLKKG</sequence>
<protein>
    <recommendedName>
        <fullName evidence="1">UPF0210 protein Pars_1033</fullName>
    </recommendedName>
</protein>
<evidence type="ECO:0000255" key="1">
    <source>
        <dbReference type="HAMAP-Rule" id="MF_01221"/>
    </source>
</evidence>
<accession>A4WJP4</accession>
<dbReference type="EMBL" id="CP000660">
    <property type="protein sequence ID" value="ABP50611.1"/>
    <property type="molecule type" value="Genomic_DNA"/>
</dbReference>
<dbReference type="SMR" id="A4WJP4"/>
<dbReference type="STRING" id="340102.Pars_1033"/>
<dbReference type="KEGG" id="pas:Pars_1033"/>
<dbReference type="HOGENOM" id="CLU_048704_0_0_2"/>
<dbReference type="OrthoDB" id="21376at2157"/>
<dbReference type="PhylomeDB" id="A4WJP4"/>
<dbReference type="Proteomes" id="UP000001567">
    <property type="component" value="Chromosome"/>
</dbReference>
<dbReference type="Gene3D" id="3.20.70.20">
    <property type="match status" value="1"/>
</dbReference>
<dbReference type="HAMAP" id="MF_01221">
    <property type="entry name" value="UPF0210"/>
    <property type="match status" value="1"/>
</dbReference>
<dbReference type="InterPro" id="IPR007841">
    <property type="entry name" value="UPF0210"/>
</dbReference>
<dbReference type="NCBIfam" id="NF003700">
    <property type="entry name" value="PRK05313.1"/>
    <property type="match status" value="1"/>
</dbReference>
<dbReference type="PANTHER" id="PTHR37560:SF1">
    <property type="entry name" value="UPF0210 PROTEIN MJ1665"/>
    <property type="match status" value="1"/>
</dbReference>
<dbReference type="PANTHER" id="PTHR37560">
    <property type="entry name" value="UPF0210 PROTEIN SPR0218"/>
    <property type="match status" value="1"/>
</dbReference>
<dbReference type="Pfam" id="PF05167">
    <property type="entry name" value="DUF711"/>
    <property type="match status" value="1"/>
</dbReference>
<dbReference type="SUPFAM" id="SSF51998">
    <property type="entry name" value="PFL-like glycyl radical enzymes"/>
    <property type="match status" value="1"/>
</dbReference>
<proteinExistence type="inferred from homology"/>
<gene>
    <name type="ordered locus">Pars_1033</name>
</gene>
<name>Y1033_PYRAR</name>
<comment type="similarity">
    <text evidence="1">Belongs to the UPF0210 family.</text>
</comment>
<organism>
    <name type="scientific">Pyrobaculum arsenaticum (strain DSM 13514 / JCM 11321 / PZ6)</name>
    <dbReference type="NCBI Taxonomy" id="340102"/>
    <lineage>
        <taxon>Archaea</taxon>
        <taxon>Thermoproteota</taxon>
        <taxon>Thermoprotei</taxon>
        <taxon>Thermoproteales</taxon>
        <taxon>Thermoproteaceae</taxon>
        <taxon>Pyrobaculum</taxon>
    </lineage>
</organism>